<sequence length="496" mass="55316">MFNYERPKHFIQPQNPCGSRLQPPGPEVSGFPSQTKQSSIVIQPRQCTEQRFSASSTVSSHITVSSSAYPAPQQLAGPNPGQKVTATYNQSPASFLSSILPSQPDYCNSKIPSTVDSNYQQSSVNQPVNAMSSQAANARPTPKTPDHEIQGSKEALIQDLERKLKCKDTLLHNGNQRLTYEEKMARRLLGPQNAAAVFQAQNSDVQDSPQHNPEQARLHVPTSQVRSRSSSRAEANDQDAIQEKFYPPRFIQVPENMSIEEGRFCRMDFKVSGLPAPDVSWYLNGRPVQSDELHKMIVSEKGFHSLIFEVVRASDAGPYACVARNRAGEATFTVQLDVLAKEHKRAPMFIFKPQSKKVFEGETVKLECQISAIPPPKLFWKRNNEMVQFNTDRISLYHDNAGRVTLLIKDVNKKDAGWYTVSAVNEAGVTTCNTRLDVTARPIQTLPAPKQLRVRPTFSKYLALNGRGLDVKQAFNPEGEFQRLAAQSGLYESEEL</sequence>
<accession>Q9JIF9</accession>
<name>MYOTI_MOUSE</name>
<proteinExistence type="evidence at protein level"/>
<organism>
    <name type="scientific">Mus musculus</name>
    <name type="common">Mouse</name>
    <dbReference type="NCBI Taxonomy" id="10090"/>
    <lineage>
        <taxon>Eukaryota</taxon>
        <taxon>Metazoa</taxon>
        <taxon>Chordata</taxon>
        <taxon>Craniata</taxon>
        <taxon>Vertebrata</taxon>
        <taxon>Euteleostomi</taxon>
        <taxon>Mammalia</taxon>
        <taxon>Eutheria</taxon>
        <taxon>Euarchontoglires</taxon>
        <taxon>Glires</taxon>
        <taxon>Rodentia</taxon>
        <taxon>Myomorpha</taxon>
        <taxon>Muroidea</taxon>
        <taxon>Muridae</taxon>
        <taxon>Murinae</taxon>
        <taxon>Mus</taxon>
        <taxon>Mus</taxon>
    </lineage>
</organism>
<feature type="chain" id="PRO_0000072688" description="Myotilin">
    <location>
        <begin position="1"/>
        <end position="496"/>
    </location>
</feature>
<feature type="domain" description="Ig-like C2-type 1">
    <location>
        <begin position="248"/>
        <end position="333"/>
    </location>
</feature>
<feature type="domain" description="Ig-like C2-type 2">
    <location>
        <begin position="347"/>
        <end position="439"/>
    </location>
</feature>
<feature type="region of interest" description="Disordered" evidence="3">
    <location>
        <begin position="1"/>
        <end position="37"/>
    </location>
</feature>
<feature type="region of interest" description="Necessary for interaction with ACTN1" evidence="1">
    <location>
        <begin position="78"/>
        <end position="149"/>
    </location>
</feature>
<feature type="region of interest" description="Disordered" evidence="3">
    <location>
        <begin position="202"/>
        <end position="239"/>
    </location>
</feature>
<feature type="region of interest" description="Necessary for interaction with ACTA1" evidence="1">
    <location>
        <begin position="213"/>
        <end position="496"/>
    </location>
</feature>
<feature type="region of interest" description="Necessary for interaction with FLNC" evidence="1">
    <location>
        <begin position="213"/>
        <end position="491"/>
    </location>
</feature>
<feature type="compositionally biased region" description="Polar residues" evidence="3">
    <location>
        <begin position="202"/>
        <end position="213"/>
    </location>
</feature>
<feature type="compositionally biased region" description="Polar residues" evidence="3">
    <location>
        <begin position="221"/>
        <end position="233"/>
    </location>
</feature>
<feature type="modified residue" description="Omega-N-methylarginine" evidence="6">
    <location>
        <position position="20"/>
    </location>
</feature>
<reference key="1">
    <citation type="journal article" date="2001" name="Mech. Dev.">
        <title>Developmental expression of myotilin, a gene mutated in limb-girdle muscular dystrophy type 1A.</title>
        <authorList>
            <person name="Mologni L."/>
            <person name="Salmikangas P."/>
            <person name="Fougerousse F."/>
            <person name="Beckmann J.S."/>
            <person name="Carpen O."/>
        </authorList>
    </citation>
    <scope>NUCLEOTIDE SEQUENCE [MRNA]</scope>
    <source>
        <tissue>Muscle</tissue>
    </source>
</reference>
<reference key="2">
    <citation type="journal article" date="2004" name="Genome Res.">
        <title>The status, quality, and expansion of the NIH full-length cDNA project: the Mammalian Gene Collection (MGC).</title>
        <authorList>
            <consortium name="The MGC Project Team"/>
        </authorList>
    </citation>
    <scope>NUCLEOTIDE SEQUENCE [LARGE SCALE MRNA]</scope>
    <source>
        <strain>FVB/N</strain>
        <tissue>Mammary gland</tissue>
    </source>
</reference>
<reference key="3">
    <citation type="journal article" date="2007" name="Mol. Cell. Biol.">
        <title>Targeted deletion of the muscular dystrophy gene myotilin does not perturb muscle structure or function in mice.</title>
        <authorList>
            <person name="Moza M."/>
            <person name="Mologni L."/>
            <person name="Trokovic R."/>
            <person name="Faulkner G."/>
            <person name="Partanen J."/>
            <person name="Carpen O."/>
        </authorList>
    </citation>
    <scope>TISSUE SPECIFICITY</scope>
    <scope>DISRUPTION PHENOTYPE</scope>
</reference>
<reference key="4">
    <citation type="journal article" date="2010" name="Cell">
        <title>A tissue-specific atlas of mouse protein phosphorylation and expression.</title>
        <authorList>
            <person name="Huttlin E.L."/>
            <person name="Jedrychowski M.P."/>
            <person name="Elias J.E."/>
            <person name="Goswami T."/>
            <person name="Rad R."/>
            <person name="Beausoleil S.A."/>
            <person name="Villen J."/>
            <person name="Haas W."/>
            <person name="Sowa M.E."/>
            <person name="Gygi S.P."/>
        </authorList>
    </citation>
    <scope>IDENTIFICATION BY MASS SPECTROMETRY [LARGE SCALE ANALYSIS]</scope>
    <source>
        <tissue>Brown adipose tissue</tissue>
        <tissue>Heart</tissue>
        <tissue>Lung</tissue>
    </source>
</reference>
<reference key="5">
    <citation type="journal article" date="2014" name="Mol. Cell. Proteomics">
        <title>Immunoaffinity enrichment and mass spectrometry analysis of protein methylation.</title>
        <authorList>
            <person name="Guo A."/>
            <person name="Gu H."/>
            <person name="Zhou J."/>
            <person name="Mulhern D."/>
            <person name="Wang Y."/>
            <person name="Lee K.A."/>
            <person name="Yang V."/>
            <person name="Aguiar M."/>
            <person name="Kornhauser J."/>
            <person name="Jia X."/>
            <person name="Ren J."/>
            <person name="Beausoleil S.A."/>
            <person name="Silva J.C."/>
            <person name="Vemulapalli V."/>
            <person name="Bedford M.T."/>
            <person name="Comb M.J."/>
        </authorList>
    </citation>
    <scope>METHYLATION [LARGE SCALE ANALYSIS] AT ARG-20</scope>
    <scope>IDENTIFICATION BY MASS SPECTROMETRY [LARGE SCALE ANALYSIS]</scope>
    <source>
        <tissue>Brain</tissue>
    </source>
</reference>
<gene>
    <name type="primary">Myot</name>
    <name type="synonym">Myo</name>
    <name type="synonym">Ttid</name>
</gene>
<evidence type="ECO:0000250" key="1"/>
<evidence type="ECO:0000250" key="2">
    <source>
        <dbReference type="UniProtKB" id="Q9UBF9"/>
    </source>
</evidence>
<evidence type="ECO:0000256" key="3">
    <source>
        <dbReference type="SAM" id="MobiDB-lite"/>
    </source>
</evidence>
<evidence type="ECO:0000269" key="4">
    <source>
    </source>
</evidence>
<evidence type="ECO:0000305" key="5"/>
<evidence type="ECO:0007744" key="6">
    <source>
    </source>
</evidence>
<protein>
    <recommendedName>
        <fullName>Myotilin</fullName>
    </recommendedName>
    <alternativeName>
        <fullName>Myofibrillar titin-like Ig domains protein</fullName>
    </alternativeName>
    <alternativeName>
        <fullName>Titin immunoglobulin domain protein</fullName>
    </alternativeName>
</protein>
<comment type="function">
    <text evidence="1">Component of a complex of multiple actin cross-linking proteins. Involved in the control of myofibril assembly and stability at the Z lines in muscle cells (By similarity).</text>
</comment>
<comment type="subunit">
    <text evidence="1">Homodimer. Interacts with ACTA1, ACTN1, FLNA, FLNB, FLNC, and MYOZ2. Interacts with the C-terminal region of MYOZ1 (By similarity).</text>
</comment>
<comment type="subcellular location">
    <subcellularLocation>
        <location evidence="2">Cell membrane</location>
        <location evidence="2">Sarcolemma</location>
    </subcellularLocation>
    <subcellularLocation>
        <location evidence="2">Cytoplasm</location>
        <location evidence="2">Cytoskeleton</location>
    </subcellularLocation>
    <subcellularLocation>
        <location evidence="2">Cytoplasm</location>
        <location evidence="2">Myofibril</location>
        <location evidence="2">Sarcomere</location>
        <location evidence="2">Z line</location>
    </subcellularLocation>
    <text evidence="2">Sarcomeric, also localized to the sarcolemma. Colocalizes with MYOZ1 at the Z-lines in skeletal muscle.</text>
</comment>
<comment type="tissue specificity">
    <text evidence="4">Expressed in skeletal muscle (at protein level).</text>
</comment>
<comment type="disruption phenotype">
    <text evidence="4">No visible phenotype. Mutant mice develop normally, have a normal life span, and their muscle capacity does not significantly differ from wild-type animals, even after prolonged physical stress.</text>
</comment>
<comment type="similarity">
    <text evidence="5">Belongs to the myotilin/palladin family.</text>
</comment>
<keyword id="KW-0009">Actin-binding</keyword>
<keyword id="KW-1003">Cell membrane</keyword>
<keyword id="KW-0963">Cytoplasm</keyword>
<keyword id="KW-0206">Cytoskeleton</keyword>
<keyword id="KW-0393">Immunoglobulin domain</keyword>
<keyword id="KW-0472">Membrane</keyword>
<keyword id="KW-0488">Methylation</keyword>
<keyword id="KW-0514">Muscle protein</keyword>
<keyword id="KW-1185">Reference proteome</keyword>
<keyword id="KW-0677">Repeat</keyword>
<dbReference type="EMBL" id="AF230979">
    <property type="protein sequence ID" value="AAF76465.1"/>
    <property type="molecule type" value="mRNA"/>
</dbReference>
<dbReference type="EMBL" id="BC016214">
    <property type="protein sequence ID" value="AAH16214.1"/>
    <property type="molecule type" value="mRNA"/>
</dbReference>
<dbReference type="CCDS" id="CCDS29228.1"/>
<dbReference type="RefSeq" id="NP_001028793.1">
    <property type="nucleotide sequence ID" value="NM_001033621.4"/>
</dbReference>
<dbReference type="RefSeq" id="XP_006526196.1">
    <property type="nucleotide sequence ID" value="XM_006526133.5"/>
</dbReference>
<dbReference type="SMR" id="Q9JIF9"/>
<dbReference type="BioGRID" id="208464">
    <property type="interactions" value="1"/>
</dbReference>
<dbReference type="FunCoup" id="Q9JIF9">
    <property type="interactions" value="70"/>
</dbReference>
<dbReference type="IntAct" id="Q9JIF9">
    <property type="interactions" value="1"/>
</dbReference>
<dbReference type="MINT" id="Q9JIF9"/>
<dbReference type="STRING" id="10090.ENSMUSP00000025349"/>
<dbReference type="iPTMnet" id="Q9JIF9"/>
<dbReference type="PhosphoSitePlus" id="Q9JIF9"/>
<dbReference type="jPOST" id="Q9JIF9"/>
<dbReference type="PaxDb" id="10090-ENSMUSP00000025349"/>
<dbReference type="ProteomicsDB" id="287338"/>
<dbReference type="Antibodypedia" id="26530">
    <property type="antibodies" value="271 antibodies from 30 providers"/>
</dbReference>
<dbReference type="DNASU" id="58916"/>
<dbReference type="Ensembl" id="ENSMUST00000025349.12">
    <property type="protein sequence ID" value="ENSMUSP00000025349.6"/>
    <property type="gene ID" value="ENSMUSG00000024471.13"/>
</dbReference>
<dbReference type="Ensembl" id="ENSMUST00000115498.2">
    <property type="protein sequence ID" value="ENSMUSP00000111160.2"/>
    <property type="gene ID" value="ENSMUSG00000024471.13"/>
</dbReference>
<dbReference type="GeneID" id="58916"/>
<dbReference type="KEGG" id="mmu:58916"/>
<dbReference type="UCSC" id="uc008euw.1">
    <property type="organism name" value="mouse"/>
</dbReference>
<dbReference type="AGR" id="MGI:1889800"/>
<dbReference type="CTD" id="9499"/>
<dbReference type="MGI" id="MGI:1889800">
    <property type="gene designation" value="Myot"/>
</dbReference>
<dbReference type="VEuPathDB" id="HostDB:ENSMUSG00000024471"/>
<dbReference type="eggNOG" id="ENOG502QTWI">
    <property type="taxonomic scope" value="Eukaryota"/>
</dbReference>
<dbReference type="GeneTree" id="ENSGT00940000159795"/>
<dbReference type="HOGENOM" id="CLU_006487_0_1_1"/>
<dbReference type="InParanoid" id="Q9JIF9"/>
<dbReference type="OMA" id="MEPHYSQ"/>
<dbReference type="OrthoDB" id="6612025at2759"/>
<dbReference type="PhylomeDB" id="Q9JIF9"/>
<dbReference type="BioGRID-ORCS" id="58916">
    <property type="hits" value="3 hits in 76 CRISPR screens"/>
</dbReference>
<dbReference type="ChiTaRS" id="Synpo2">
    <property type="organism name" value="mouse"/>
</dbReference>
<dbReference type="PRO" id="PR:Q9JIF9"/>
<dbReference type="Proteomes" id="UP000000589">
    <property type="component" value="Chromosome 18"/>
</dbReference>
<dbReference type="RNAct" id="Q9JIF9">
    <property type="molecule type" value="protein"/>
</dbReference>
<dbReference type="Bgee" id="ENSMUSG00000024471">
    <property type="expression patterns" value="Expressed in digastric muscle group and 116 other cell types or tissues"/>
</dbReference>
<dbReference type="ExpressionAtlas" id="Q9JIF9">
    <property type="expression patterns" value="baseline and differential"/>
</dbReference>
<dbReference type="GO" id="GO:0005856">
    <property type="term" value="C:cytoskeleton"/>
    <property type="evidence" value="ECO:0007669"/>
    <property type="project" value="UniProtKB-SubCell"/>
</dbReference>
<dbReference type="GO" id="GO:0042383">
    <property type="term" value="C:sarcolemma"/>
    <property type="evidence" value="ECO:0007669"/>
    <property type="project" value="UniProtKB-SubCell"/>
</dbReference>
<dbReference type="GO" id="GO:0030018">
    <property type="term" value="C:Z disc"/>
    <property type="evidence" value="ECO:0000314"/>
    <property type="project" value="MGI"/>
</dbReference>
<dbReference type="GO" id="GO:0003779">
    <property type="term" value="F:actin binding"/>
    <property type="evidence" value="ECO:0007669"/>
    <property type="project" value="UniProtKB-KW"/>
</dbReference>
<dbReference type="GO" id="GO:0051393">
    <property type="term" value="F:alpha-actinin binding"/>
    <property type="evidence" value="ECO:0000266"/>
    <property type="project" value="MGI"/>
</dbReference>
<dbReference type="CDD" id="cd05892">
    <property type="entry name" value="IgI_Myotilin_C"/>
    <property type="match status" value="1"/>
</dbReference>
<dbReference type="FunFam" id="2.60.40.10:FF:000694">
    <property type="entry name" value="Myotilin"/>
    <property type="match status" value="1"/>
</dbReference>
<dbReference type="FunFam" id="2.60.40.10:FF:000702">
    <property type="entry name" value="Myotilin"/>
    <property type="match status" value="1"/>
</dbReference>
<dbReference type="Gene3D" id="2.60.40.10">
    <property type="entry name" value="Immunoglobulins"/>
    <property type="match status" value="2"/>
</dbReference>
<dbReference type="InterPro" id="IPR007110">
    <property type="entry name" value="Ig-like_dom"/>
</dbReference>
<dbReference type="InterPro" id="IPR036179">
    <property type="entry name" value="Ig-like_dom_sf"/>
</dbReference>
<dbReference type="InterPro" id="IPR013783">
    <property type="entry name" value="Ig-like_fold"/>
</dbReference>
<dbReference type="InterPro" id="IPR013098">
    <property type="entry name" value="Ig_I-set"/>
</dbReference>
<dbReference type="InterPro" id="IPR003599">
    <property type="entry name" value="Ig_sub"/>
</dbReference>
<dbReference type="InterPro" id="IPR003598">
    <property type="entry name" value="Ig_sub2"/>
</dbReference>
<dbReference type="PANTHER" id="PTHR10075">
    <property type="entry name" value="BASIGIN RELATED"/>
    <property type="match status" value="1"/>
</dbReference>
<dbReference type="PANTHER" id="PTHR10075:SF23">
    <property type="entry name" value="MYOTILIN"/>
    <property type="match status" value="1"/>
</dbReference>
<dbReference type="Pfam" id="PF07679">
    <property type="entry name" value="I-set"/>
    <property type="match status" value="2"/>
</dbReference>
<dbReference type="SMART" id="SM00409">
    <property type="entry name" value="IG"/>
    <property type="match status" value="2"/>
</dbReference>
<dbReference type="SMART" id="SM00408">
    <property type="entry name" value="IGc2"/>
    <property type="match status" value="2"/>
</dbReference>
<dbReference type="SUPFAM" id="SSF48726">
    <property type="entry name" value="Immunoglobulin"/>
    <property type="match status" value="2"/>
</dbReference>
<dbReference type="PROSITE" id="PS50835">
    <property type="entry name" value="IG_LIKE"/>
    <property type="match status" value="2"/>
</dbReference>